<accession>Q148M7</accession>
<organism>
    <name type="scientific">Bos taurus</name>
    <name type="common">Bovine</name>
    <dbReference type="NCBI Taxonomy" id="9913"/>
    <lineage>
        <taxon>Eukaryota</taxon>
        <taxon>Metazoa</taxon>
        <taxon>Chordata</taxon>
        <taxon>Craniata</taxon>
        <taxon>Vertebrata</taxon>
        <taxon>Euteleostomi</taxon>
        <taxon>Mammalia</taxon>
        <taxon>Eutheria</taxon>
        <taxon>Laurasiatheria</taxon>
        <taxon>Artiodactyla</taxon>
        <taxon>Ruminantia</taxon>
        <taxon>Pecora</taxon>
        <taxon>Bovidae</taxon>
        <taxon>Bovinae</taxon>
        <taxon>Bos</taxon>
    </lineage>
</organism>
<evidence type="ECO:0000250" key="1">
    <source>
        <dbReference type="UniProtKB" id="Q15543"/>
    </source>
</evidence>
<evidence type="ECO:0000256" key="2">
    <source>
        <dbReference type="SAM" id="MobiDB-lite"/>
    </source>
</evidence>
<evidence type="ECO:0000305" key="3"/>
<protein>
    <recommendedName>
        <fullName evidence="1">Transcription initiation factor TFIID subunit 13</fullName>
    </recommendedName>
    <alternativeName>
        <fullName evidence="1">Transcription initiation factor TFIID 18 kDa subunit</fullName>
        <shortName evidence="1">TAF(II)18</shortName>
        <shortName evidence="1">TAFII-18</shortName>
        <shortName evidence="1">TAFII18</shortName>
    </alternativeName>
</protein>
<dbReference type="EMBL" id="BC118136">
    <property type="protein sequence ID" value="AAI18137.1"/>
    <property type="molecule type" value="mRNA"/>
</dbReference>
<dbReference type="RefSeq" id="NP_001069065.1">
    <property type="nucleotide sequence ID" value="NM_001075597.1"/>
</dbReference>
<dbReference type="SMR" id="Q148M7"/>
<dbReference type="FunCoup" id="Q148M7">
    <property type="interactions" value="1619"/>
</dbReference>
<dbReference type="STRING" id="9913.ENSBTAP00000065427"/>
<dbReference type="PaxDb" id="9913-ENSBTAP00000042334"/>
<dbReference type="Ensembl" id="ENSBTAT00000088307.1">
    <property type="protein sequence ID" value="ENSBTAP00000080015.1"/>
    <property type="gene ID" value="ENSBTAG00000062514.1"/>
</dbReference>
<dbReference type="GeneID" id="513065"/>
<dbReference type="KEGG" id="bta:513065"/>
<dbReference type="CTD" id="6884"/>
<dbReference type="eggNOG" id="KOG3901">
    <property type="taxonomic scope" value="Eukaryota"/>
</dbReference>
<dbReference type="GeneTree" id="ENSGT00390000012981"/>
<dbReference type="HOGENOM" id="CLU_076665_4_0_1"/>
<dbReference type="InParanoid" id="Q148M7"/>
<dbReference type="OrthoDB" id="10266074at2759"/>
<dbReference type="TreeFam" id="TF323609"/>
<dbReference type="Proteomes" id="UP000009136">
    <property type="component" value="Chromosome 3"/>
</dbReference>
<dbReference type="GO" id="GO:0005669">
    <property type="term" value="C:transcription factor TFIID complex"/>
    <property type="evidence" value="ECO:0000318"/>
    <property type="project" value="GO_Central"/>
</dbReference>
<dbReference type="GO" id="GO:0046982">
    <property type="term" value="F:protein heterodimerization activity"/>
    <property type="evidence" value="ECO:0007669"/>
    <property type="project" value="InterPro"/>
</dbReference>
<dbReference type="GO" id="GO:0006366">
    <property type="term" value="P:transcription by RNA polymerase II"/>
    <property type="evidence" value="ECO:0000318"/>
    <property type="project" value="GO_Central"/>
</dbReference>
<dbReference type="CDD" id="cd07978">
    <property type="entry name" value="HFD_TAF13"/>
    <property type="match status" value="1"/>
</dbReference>
<dbReference type="FunFam" id="1.10.20.10:FF:000028">
    <property type="entry name" value="Transcription initiation factor TFIID subunit 13"/>
    <property type="match status" value="1"/>
</dbReference>
<dbReference type="Gene3D" id="1.10.20.10">
    <property type="entry name" value="Histone, subunit A"/>
    <property type="match status" value="1"/>
</dbReference>
<dbReference type="InterPro" id="IPR009072">
    <property type="entry name" value="Histone-fold"/>
</dbReference>
<dbReference type="InterPro" id="IPR003195">
    <property type="entry name" value="TFIID_TAF13"/>
</dbReference>
<dbReference type="PANTHER" id="PTHR11380:SF5">
    <property type="entry name" value="TRANSCRIPTION INITIATION FACTOR TFIID SUBUNIT 13"/>
    <property type="match status" value="1"/>
</dbReference>
<dbReference type="PANTHER" id="PTHR11380">
    <property type="entry name" value="TRANSCRIPTION INITIATION FACTOR TFIID/SUPT3-RELATED"/>
    <property type="match status" value="1"/>
</dbReference>
<dbReference type="Pfam" id="PF02269">
    <property type="entry name" value="TFIID-18kDa"/>
    <property type="match status" value="1"/>
</dbReference>
<dbReference type="SUPFAM" id="SSF47113">
    <property type="entry name" value="Histone-fold"/>
    <property type="match status" value="1"/>
</dbReference>
<keyword id="KW-0539">Nucleus</keyword>
<keyword id="KW-1185">Reference proteome</keyword>
<keyword id="KW-0804">Transcription</keyword>
<keyword id="KW-0805">Transcription regulation</keyword>
<reference key="1">
    <citation type="submission" date="2006-06" db="EMBL/GenBank/DDBJ databases">
        <authorList>
            <consortium name="NIH - Mammalian Gene Collection (MGC) project"/>
        </authorList>
    </citation>
    <scope>NUCLEOTIDE SEQUENCE [LARGE SCALE MRNA]</scope>
    <source>
        <strain>Hereford</strain>
        <tissue>Thymus</tissue>
    </source>
</reference>
<proteinExistence type="evidence at transcript level"/>
<sequence>MADEEEDPTFEEENEEIGGGAEGGQGKRKRLFSKELRCMMYGFGDDQNPYTESVDILEDLVIEFITEMTHKAMSIGRQGRVQVEDIVFLIRKDPRKFARVKDLLTMNEELKRARKAFDEANYGS</sequence>
<gene>
    <name evidence="1" type="primary">TAF13</name>
</gene>
<name>TAF13_BOVIN</name>
<comment type="function">
    <text evidence="1">The TFIID basal transcription factor complex plays a major role in the initiation of RNA polymerase II (Pol II)-dependent transcription. TFIID recognizes and binds promoters via its subunit TBP, a TATA-box-binding protein, and promotes assembly of the pre-initiation complex (PIC). The TFIID complex consists of TBP and TBP-associated factors (TAFs), including TAF1, TAF2, TAF3, TAF4, TAF5, TAF6, TAF7, TAF8, TAF9, TAF10, TAF11, TAF12 and TAF13. TAF13, together with TAF11 and TBP, play key roles during promoter binding by the TFIID and TFIIA transcription factor complexes.</text>
</comment>
<comment type="subunit">
    <text evidence="1">Component of the TFIID basal transcription factor complex, composed of TATA-box-binding protein TBP, and a number of TBP-associated factors (TAFs), including TAF1, TAF2, TAF3, TAF4, TAF5, TAF6, TAF7, TAF8, TAF9, TAF10, TAF11, TAF12 and TAF13. Interacts with TBP, and more strongly with TAF10 and TAF11.</text>
</comment>
<comment type="subcellular location">
    <subcellularLocation>
        <location evidence="1">Nucleus</location>
    </subcellularLocation>
</comment>
<comment type="domain">
    <text evidence="1">The binding of TAF10 and TAF11 requires distinct domains of TAF13.</text>
</comment>
<comment type="similarity">
    <text evidence="3">Belongs to the TAF13 family.</text>
</comment>
<feature type="chain" id="PRO_0000268198" description="Transcription initiation factor TFIID subunit 13">
    <location>
        <begin position="1"/>
        <end position="124"/>
    </location>
</feature>
<feature type="domain" description="Histone-fold" evidence="3">
    <location>
        <begin position="32"/>
        <end position="74"/>
    </location>
</feature>
<feature type="region of interest" description="Disordered" evidence="2">
    <location>
        <begin position="1"/>
        <end position="28"/>
    </location>
</feature>
<feature type="compositionally biased region" description="Acidic residues" evidence="2">
    <location>
        <begin position="1"/>
        <end position="16"/>
    </location>
</feature>